<name>AAE1_CANSA</name>
<protein>
    <recommendedName>
        <fullName evidence="4">Hexanoyl-CoA synthase</fullName>
        <ecNumber evidence="3">6.2.1.-</ecNumber>
    </recommendedName>
    <alternativeName>
        <fullName evidence="4">Acyl-activating enzyme 1</fullName>
        <shortName evidence="4">CsAAE1</shortName>
    </alternativeName>
</protein>
<reference key="1">
    <citation type="journal article" date="2012" name="Plant J.">
        <title>The hexanoyl-CoA precursor for cannabinoid biosynthesis is formed by an acyl-activating enzyme in Cannabis sativa trichomes.</title>
        <authorList>
            <person name="Stout J.M."/>
            <person name="Boubakir Z."/>
            <person name="Ambrose S.J."/>
            <person name="Purves R.W."/>
            <person name="Page J.E."/>
        </authorList>
    </citation>
    <scope>NUCLEOTIDE SEQUENCE [MRNA]</scope>
    <scope>FUNCTION</scope>
    <scope>CATALYTIC ACTIVITY</scope>
    <scope>TISSUE SPECIFICITY</scope>
    <scope>SUBCELLULAR LOCATION</scope>
    <scope>BIOPHYSICOCHEMICAL PROPERTIES</scope>
    <scope>COFACTOR</scope>
    <scope>ACTIVITY REGULATION</scope>
</reference>
<reference key="2">
    <citation type="submission" date="2019-09" db="EMBL/GenBank/DDBJ databases">
        <title>De novo assembly and annotation of transcriptomes from two cultivars of Cannabis sativa with different cannabinoid profiles.</title>
        <authorList>
            <person name="McGarvey P."/>
        </authorList>
    </citation>
    <scope>NUCLEOTIDE SEQUENCE [LARGE SCALE MRNA]</scope>
    <source>
        <strain>cv. Hetech2</strain>
        <strain>cv. Lali</strain>
        <tissue>Flower bud</tissue>
    </source>
</reference>
<reference key="3">
    <citation type="journal article" date="2007" name="Chem. Biodivers.">
        <title>Phytocannabinoids in Cannabis sativa: recent studies on biosynthetic enzymes.</title>
        <authorList>
            <person name="Taura F."/>
            <person name="Sirikantaramas S."/>
            <person name="Shoyama Y."/>
            <person name="Shoyama Y."/>
            <person name="Morimoto S."/>
        </authorList>
    </citation>
    <scope>REVIEW</scope>
</reference>
<reference key="4">
    <citation type="journal article" date="2019" name="Nat. Prod. Rep.">
        <title>Non-volatile natural products in plant glandular trichomes: chemistry, biological activities and biosynthesis.</title>
        <authorList>
            <person name="Liu Y."/>
            <person name="Jing S.-X."/>
            <person name="Luo S.-H."/>
            <person name="Li S.-H."/>
        </authorList>
    </citation>
    <scope>PATHWAY</scope>
    <scope>REVIEW</scope>
</reference>
<comment type="function">
    <text evidence="3">Involved in the biosynthesis of cannabinoids-related terpenophenolic natural products, which have pharmacological activity (PubMed:22353623). Acyl-activating enzyme that catalyzes the conversion of hexanoic acid to hexanoyl-CoA, precursor of the cannabinoid pathway (PubMed:22353623). Can also activate other fatty acids including heptanoate, octanoate and nonanoate (PubMed:22353623).</text>
</comment>
<comment type="catalytic activity">
    <reaction evidence="3">
        <text>hexanoate + ATP + CoA = hexanoyl-CoA + AMP + diphosphate</text>
        <dbReference type="Rhea" id="RHEA:43740"/>
        <dbReference type="ChEBI" id="CHEBI:17120"/>
        <dbReference type="ChEBI" id="CHEBI:30616"/>
        <dbReference type="ChEBI" id="CHEBI:33019"/>
        <dbReference type="ChEBI" id="CHEBI:57287"/>
        <dbReference type="ChEBI" id="CHEBI:62620"/>
        <dbReference type="ChEBI" id="CHEBI:456215"/>
    </reaction>
    <physiologicalReaction direction="left-to-right" evidence="3">
        <dbReference type="Rhea" id="RHEA:43741"/>
    </physiologicalReaction>
</comment>
<comment type="cofactor">
    <cofactor evidence="3">
        <name>Mg(2+)</name>
        <dbReference type="ChEBI" id="CHEBI:18420"/>
    </cofactor>
</comment>
<comment type="activity regulation">
    <text evidence="3">Inhibitied by high CoA concentrations.</text>
</comment>
<comment type="biophysicochemical properties">
    <kinetics>
        <KM evidence="3">0.26 uM for CoA</KM>
        <KM evidence="3">3.7 uM for hexanoate</KM>
        <KM evidence="3">1.7 uM for decanoate</KM>
        <Vmax evidence="3">6.8 pmol/sec/g enzyme with hexanoate as substrate</Vmax>
        <Vmax evidence="3">1.8 pmol/sec/g enzyme with decanoate as substrate</Vmax>
        <text evidence="3">kcat is 2 sec(-1) with hexanoate as substrate (PubMed:22353623). kcat is 0.5 sec(-1) with decanoate as substrate (PubMed:22353623).</text>
    </kinetics>
    <phDependence>
        <text evidence="3">Optimum pH is 9.</text>
    </phDependence>
    <temperatureDependence>
        <text evidence="3">Optimum temperature is 40 degrees Celsius.</text>
    </temperatureDependence>
</comment>
<comment type="pathway">
    <text evidence="5">Secondary metabolite biosynthesis; terpenoid biosynthesis.</text>
</comment>
<comment type="subcellular location">
    <subcellularLocation>
        <location evidence="3">Cytoplasm</location>
        <location evidence="3">Cytosol</location>
    </subcellularLocation>
    <subcellularLocation>
        <location evidence="2">Membrane</location>
        <topology evidence="2">Single-pass membrane protein</topology>
    </subcellularLocation>
</comment>
<comment type="tissue specificity">
    <text evidence="3">Accumulates in glandular trichomes, especially in female flowers (PubMed:22353623). Present at low levels in roots, stems and leaves (PubMed:22353623).</text>
</comment>
<comment type="similarity">
    <text evidence="6">Belongs to the ATP-dependent AMP-binding enzyme family.</text>
</comment>
<gene>
    <name evidence="4" type="primary">AAE1</name>
</gene>
<keyword id="KW-0067">ATP-binding</keyword>
<keyword id="KW-0963">Cytoplasm</keyword>
<keyword id="KW-0276">Fatty acid metabolism</keyword>
<keyword id="KW-0436">Ligase</keyword>
<keyword id="KW-0443">Lipid metabolism</keyword>
<keyword id="KW-0460">Magnesium</keyword>
<keyword id="KW-0472">Membrane</keyword>
<keyword id="KW-0547">Nucleotide-binding</keyword>
<keyword id="KW-0812">Transmembrane</keyword>
<keyword id="KW-1133">Transmembrane helix</keyword>
<feature type="chain" id="PRO_0000456523" description="Hexanoyl-CoA synthase">
    <location>
        <begin position="1"/>
        <end position="720"/>
    </location>
</feature>
<feature type="transmembrane region" description="Helical" evidence="2">
    <location>
        <begin position="242"/>
        <end position="262"/>
    </location>
</feature>
<feature type="binding site" evidence="1">
    <location>
        <begin position="290"/>
        <end position="293"/>
    </location>
    <ligand>
        <name>CoA</name>
        <dbReference type="ChEBI" id="CHEBI:57287"/>
    </ligand>
</feature>
<feature type="binding site" evidence="1">
    <location>
        <begin position="477"/>
        <end position="479"/>
    </location>
    <ligand>
        <name>ATP</name>
        <dbReference type="ChEBI" id="CHEBI:30616"/>
    </ligand>
</feature>
<feature type="binding site" evidence="1">
    <location>
        <begin position="499"/>
        <end position="504"/>
    </location>
    <ligand>
        <name>ATP</name>
        <dbReference type="ChEBI" id="CHEBI:30616"/>
    </ligand>
</feature>
<feature type="binding site" evidence="1">
    <location>
        <position position="585"/>
    </location>
    <ligand>
        <name>ATP</name>
        <dbReference type="ChEBI" id="CHEBI:30616"/>
    </ligand>
</feature>
<feature type="binding site" evidence="1">
    <location>
        <position position="607"/>
    </location>
    <ligand>
        <name>ATP</name>
        <dbReference type="ChEBI" id="CHEBI:30616"/>
    </ligand>
</feature>
<feature type="binding site" evidence="1">
    <location>
        <position position="615"/>
    </location>
    <ligand>
        <name>CoA</name>
        <dbReference type="ChEBI" id="CHEBI:57287"/>
    </ligand>
</feature>
<feature type="binding site" evidence="1">
    <location>
        <position position="618"/>
    </location>
    <ligand>
        <name>ATP</name>
        <dbReference type="ChEBI" id="CHEBI:30616"/>
    </ligand>
</feature>
<feature type="binding site" evidence="1">
    <location>
        <position position="681"/>
    </location>
    <ligand>
        <name>CoA</name>
        <dbReference type="ChEBI" id="CHEBI:57287"/>
    </ligand>
</feature>
<feature type="site" description="Hinge residue important for conformational flexibility" evidence="1">
    <location>
        <position position="609"/>
    </location>
</feature>
<feature type="sequence conflict" description="In Ref. 2; MBA5282450." evidence="6" ref="2">
    <original>L</original>
    <variation>M</variation>
    <location>
        <position position="95"/>
    </location>
</feature>
<feature type="sequence conflict" description="In Ref. 2; MBA5282450/MBA5282439." evidence="6" ref="2">
    <original>R</original>
    <variation>RD</variation>
    <location>
        <position position="155"/>
    </location>
</feature>
<feature type="sequence conflict" description="In Ref. 2; MBA5282439." evidence="6" ref="2">
    <original>K</original>
    <variation>N</variation>
    <location>
        <position position="538"/>
    </location>
</feature>
<proteinExistence type="evidence at protein level"/>
<accession>H9A1V3</accession>
<accession>A0A7C9B262</accession>
<accession>A0A7C9FJI0</accession>
<organism>
    <name type="scientific">Cannabis sativa</name>
    <name type="common">Hemp</name>
    <name type="synonym">Marijuana</name>
    <dbReference type="NCBI Taxonomy" id="3483"/>
    <lineage>
        <taxon>Eukaryota</taxon>
        <taxon>Viridiplantae</taxon>
        <taxon>Streptophyta</taxon>
        <taxon>Embryophyta</taxon>
        <taxon>Tracheophyta</taxon>
        <taxon>Spermatophyta</taxon>
        <taxon>Magnoliopsida</taxon>
        <taxon>eudicotyledons</taxon>
        <taxon>Gunneridae</taxon>
        <taxon>Pentapetalae</taxon>
        <taxon>rosids</taxon>
        <taxon>fabids</taxon>
        <taxon>Rosales</taxon>
        <taxon>Cannabaceae</taxon>
        <taxon>Cannabis</taxon>
    </lineage>
</organism>
<evidence type="ECO:0000250" key="1">
    <source>
        <dbReference type="UniProtKB" id="Q8ZKF6"/>
    </source>
</evidence>
<evidence type="ECO:0000255" key="2"/>
<evidence type="ECO:0000269" key="3">
    <source>
    </source>
</evidence>
<evidence type="ECO:0000303" key="4">
    <source>
    </source>
</evidence>
<evidence type="ECO:0000303" key="5">
    <source>
    </source>
</evidence>
<evidence type="ECO:0000305" key="6"/>
<dbReference type="EC" id="6.2.1.-" evidence="3"/>
<dbReference type="EMBL" id="JN717233">
    <property type="protein sequence ID" value="AFD33345.1"/>
    <property type="molecule type" value="mRNA"/>
</dbReference>
<dbReference type="EMBL" id="GHVG01000005">
    <property type="protein sequence ID" value="MBA5282450.1"/>
    <property type="molecule type" value="Transcribed_RNA"/>
</dbReference>
<dbReference type="EMBL" id="GHVF01000006">
    <property type="protein sequence ID" value="MBA5282439.1"/>
    <property type="molecule type" value="Transcribed_RNA"/>
</dbReference>
<dbReference type="SMR" id="H9A1V3"/>
<dbReference type="UniPathway" id="UPA00213"/>
<dbReference type="Proteomes" id="UP000596661">
    <property type="component" value="Unplaced"/>
</dbReference>
<dbReference type="GO" id="GO:0005829">
    <property type="term" value="C:cytosol"/>
    <property type="evidence" value="ECO:0000314"/>
    <property type="project" value="UniProtKB"/>
</dbReference>
<dbReference type="GO" id="GO:0016020">
    <property type="term" value="C:membrane"/>
    <property type="evidence" value="ECO:0007669"/>
    <property type="project" value="UniProtKB-SubCell"/>
</dbReference>
<dbReference type="GO" id="GO:0005524">
    <property type="term" value="F:ATP binding"/>
    <property type="evidence" value="ECO:0007669"/>
    <property type="project" value="UniProtKB-KW"/>
</dbReference>
<dbReference type="GO" id="GO:0016405">
    <property type="term" value="F:CoA-ligase activity"/>
    <property type="evidence" value="ECO:0000314"/>
    <property type="project" value="UniProtKB"/>
</dbReference>
<dbReference type="GO" id="GO:1901696">
    <property type="term" value="P:cannabinoid biosynthetic process"/>
    <property type="evidence" value="ECO:0000314"/>
    <property type="project" value="UniProtKB"/>
</dbReference>
<dbReference type="GO" id="GO:0006631">
    <property type="term" value="P:fatty acid metabolic process"/>
    <property type="evidence" value="ECO:0007669"/>
    <property type="project" value="UniProtKB-KW"/>
</dbReference>
<dbReference type="GO" id="GO:0046949">
    <property type="term" value="P:fatty-acyl-CoA biosynthetic process"/>
    <property type="evidence" value="ECO:0000314"/>
    <property type="project" value="UniProtKB"/>
</dbReference>
<dbReference type="GO" id="GO:0016114">
    <property type="term" value="P:terpenoid biosynthetic process"/>
    <property type="evidence" value="ECO:0007669"/>
    <property type="project" value="UniProtKB-UniPathway"/>
</dbReference>
<dbReference type="Gene3D" id="3.30.300.30">
    <property type="match status" value="1"/>
</dbReference>
<dbReference type="Gene3D" id="3.40.50.12780">
    <property type="entry name" value="N-terminal domain of ligase-like"/>
    <property type="match status" value="1"/>
</dbReference>
<dbReference type="InterPro" id="IPR045851">
    <property type="entry name" value="AMP-bd_C_sf"/>
</dbReference>
<dbReference type="InterPro" id="IPR020845">
    <property type="entry name" value="AMP-binding_CS"/>
</dbReference>
<dbReference type="InterPro" id="IPR000873">
    <property type="entry name" value="AMP-dep_synth/lig_dom"/>
</dbReference>
<dbReference type="InterPro" id="IPR042099">
    <property type="entry name" value="ANL_N_sf"/>
</dbReference>
<dbReference type="PANTHER" id="PTHR44378">
    <property type="entry name" value="ACYL-ACTIVATING ENZYME 17, PEROXISOMAL-RELATED"/>
    <property type="match status" value="1"/>
</dbReference>
<dbReference type="PANTHER" id="PTHR44378:SF2">
    <property type="entry name" value="ACYL-ACTIVATING ENZYME 17, PEROXISOMAL-RELATED"/>
    <property type="match status" value="1"/>
</dbReference>
<dbReference type="Pfam" id="PF00501">
    <property type="entry name" value="AMP-binding"/>
    <property type="match status" value="1"/>
</dbReference>
<dbReference type="SUPFAM" id="SSF56801">
    <property type="entry name" value="Acetyl-CoA synthetase-like"/>
    <property type="match status" value="1"/>
</dbReference>
<dbReference type="PROSITE" id="PS00455">
    <property type="entry name" value="AMP_BINDING"/>
    <property type="match status" value="1"/>
</dbReference>
<sequence>MGKNYKSLDSVVASDFIALGITSEVAETLHGRLAEIVCNYGAATPQTWINIANHILSPDLPFSLHQMLFYGCYKDFGPAPPAWIPDPEKVKSTNLGALLEKRGKEFLGVKYKDPISSFSHFQEFSVRNPEVYWRTVLMDEMKISFSKDPECILRRDDINNPGGSEWLPGGYLNSAKNCLNVNSNKKLNDTMIVWRDEGNDDLPLNKLTLDQLRKRVWLVGYALEEMGLEKGCAIAIDMPMHVDAVVIYLAIVLAGYVVVSIADSFSAPEISTRLRLSKAKAIFTQDHIIRGKKRIPLYSRVVEAKSPMAIVIPCSGSNIGAELRDGDISWDYFLERAKEFKNCEFTAREQPVDAYTNILFSSGTTGEPKAIPWTQATPLKAAADGWSHLDIRKGDVIVWPTNLGWMMGPWLVYASLLNGASIALYNGSPLVSGFAKFVQDAKVTMLGVVPSIVRSWKSTNCVSGYDWSTIRCFSSSGEASNVDEYLWLMGRANYKPVIEMCGGTEIGGAFSAGSFLQAQSLSSFSSQCMGCTLYILDKNGYPMPKNKPGIGELALGPVMFGASKTLLNGNHHDVYFKGMPTLNGEVLRRHGDIFELTSNGYYHAHGRADDTMNIGGIKISSIEIERVCNEVDDRVFETTAIGVPPLGGGPEQLVIFFVLKDSNDTTIDLNQLRLSFNLGLQKKLNPLFKVTRVVPLSSLPRTATNKIMRRVLRQQFSHFE</sequence>